<feature type="chain" id="PRO_1000145173" description="Urease accessory protein UreG">
    <location>
        <begin position="1"/>
        <end position="201"/>
    </location>
</feature>
<feature type="binding site" evidence="1">
    <location>
        <begin position="12"/>
        <end position="19"/>
    </location>
    <ligand>
        <name>GTP</name>
        <dbReference type="ChEBI" id="CHEBI:37565"/>
    </ligand>
</feature>
<proteinExistence type="inferred from homology"/>
<reference key="1">
    <citation type="journal article" date="2009" name="BMC Genomics">
        <title>Metabolic analysis of the soil microbe Dechloromonas aromatica str. RCB: indications of a surprisingly complex life-style and cryptic anaerobic pathways for aromatic degradation.</title>
        <authorList>
            <person name="Salinero K.K."/>
            <person name="Keller K."/>
            <person name="Feil W.S."/>
            <person name="Feil H."/>
            <person name="Trong S."/>
            <person name="Di Bartolo G."/>
            <person name="Lapidus A."/>
        </authorList>
    </citation>
    <scope>NUCLEOTIDE SEQUENCE [LARGE SCALE GENOMIC DNA]</scope>
    <source>
        <strain>RCB</strain>
    </source>
</reference>
<organism>
    <name type="scientific">Dechloromonas aromatica (strain RCB)</name>
    <dbReference type="NCBI Taxonomy" id="159087"/>
    <lineage>
        <taxon>Bacteria</taxon>
        <taxon>Pseudomonadati</taxon>
        <taxon>Pseudomonadota</taxon>
        <taxon>Betaproteobacteria</taxon>
        <taxon>Rhodocyclales</taxon>
        <taxon>Azonexaceae</taxon>
        <taxon>Dechloromonas</taxon>
    </lineage>
</organism>
<accession>Q47G58</accession>
<keyword id="KW-0143">Chaperone</keyword>
<keyword id="KW-0963">Cytoplasm</keyword>
<keyword id="KW-0342">GTP-binding</keyword>
<keyword id="KW-0996">Nickel insertion</keyword>
<keyword id="KW-0547">Nucleotide-binding</keyword>
<sequence length="201" mass="21429">MSKQALRVGIGGPVGSGKTALTLALCQALREQIDMAVVTNDIYTAEDAKFLVNHSALAPERIIGVETGGCPHTAIREDASINLEAIDRLQRAFPAVELILVESGGDNLAATFSPELSDLTIYVIDVAAGEKIPRKGGPGITKSDLLVINKIDLAPMVGASLEVMAHDAKVQRGERPFVFTNLKTGHGLETIIEFIREKGML</sequence>
<comment type="function">
    <text evidence="1">Facilitates the functional incorporation of the urease nickel metallocenter. This process requires GTP hydrolysis, probably effectuated by UreG.</text>
</comment>
<comment type="subunit">
    <text evidence="1">Homodimer. UreD, UreF and UreG form a complex that acts as a GTP-hydrolysis-dependent molecular chaperone, activating the urease apoprotein by helping to assemble the nickel containing metallocenter of UreC. The UreE protein probably delivers the nickel.</text>
</comment>
<comment type="subcellular location">
    <subcellularLocation>
        <location evidence="1">Cytoplasm</location>
    </subcellularLocation>
</comment>
<comment type="similarity">
    <text evidence="1">Belongs to the SIMIBI class G3E GTPase family. UreG subfamily.</text>
</comment>
<name>UREG_DECAR</name>
<dbReference type="EMBL" id="CP000089">
    <property type="protein sequence ID" value="AAZ46173.1"/>
    <property type="molecule type" value="Genomic_DNA"/>
</dbReference>
<dbReference type="SMR" id="Q47G58"/>
<dbReference type="STRING" id="159087.Daro_1424"/>
<dbReference type="KEGG" id="dar:Daro_1424"/>
<dbReference type="eggNOG" id="COG0378">
    <property type="taxonomic scope" value="Bacteria"/>
</dbReference>
<dbReference type="HOGENOM" id="CLU_072144_1_0_4"/>
<dbReference type="OrthoDB" id="9802035at2"/>
<dbReference type="GO" id="GO:0005737">
    <property type="term" value="C:cytoplasm"/>
    <property type="evidence" value="ECO:0007669"/>
    <property type="project" value="UniProtKB-SubCell"/>
</dbReference>
<dbReference type="GO" id="GO:0005525">
    <property type="term" value="F:GTP binding"/>
    <property type="evidence" value="ECO:0007669"/>
    <property type="project" value="UniProtKB-KW"/>
</dbReference>
<dbReference type="GO" id="GO:0003924">
    <property type="term" value="F:GTPase activity"/>
    <property type="evidence" value="ECO:0007669"/>
    <property type="project" value="InterPro"/>
</dbReference>
<dbReference type="GO" id="GO:0016151">
    <property type="term" value="F:nickel cation binding"/>
    <property type="evidence" value="ECO:0007669"/>
    <property type="project" value="UniProtKB-UniRule"/>
</dbReference>
<dbReference type="GO" id="GO:0043419">
    <property type="term" value="P:urea catabolic process"/>
    <property type="evidence" value="ECO:0007669"/>
    <property type="project" value="InterPro"/>
</dbReference>
<dbReference type="CDD" id="cd05540">
    <property type="entry name" value="UreG"/>
    <property type="match status" value="1"/>
</dbReference>
<dbReference type="FunFam" id="3.40.50.300:FF:000208">
    <property type="entry name" value="Urease accessory protein UreG"/>
    <property type="match status" value="1"/>
</dbReference>
<dbReference type="Gene3D" id="3.40.50.300">
    <property type="entry name" value="P-loop containing nucleotide triphosphate hydrolases"/>
    <property type="match status" value="1"/>
</dbReference>
<dbReference type="HAMAP" id="MF_01389">
    <property type="entry name" value="UreG"/>
    <property type="match status" value="1"/>
</dbReference>
<dbReference type="InterPro" id="IPR003495">
    <property type="entry name" value="CobW/HypB/UreG_nucleotide-bd"/>
</dbReference>
<dbReference type="InterPro" id="IPR027417">
    <property type="entry name" value="P-loop_NTPase"/>
</dbReference>
<dbReference type="InterPro" id="IPR004400">
    <property type="entry name" value="UreG"/>
</dbReference>
<dbReference type="NCBIfam" id="TIGR00101">
    <property type="entry name" value="ureG"/>
    <property type="match status" value="1"/>
</dbReference>
<dbReference type="PANTHER" id="PTHR31715">
    <property type="entry name" value="UREASE ACCESSORY PROTEIN G"/>
    <property type="match status" value="1"/>
</dbReference>
<dbReference type="PANTHER" id="PTHR31715:SF0">
    <property type="entry name" value="UREASE ACCESSORY PROTEIN G"/>
    <property type="match status" value="1"/>
</dbReference>
<dbReference type="Pfam" id="PF02492">
    <property type="entry name" value="cobW"/>
    <property type="match status" value="1"/>
</dbReference>
<dbReference type="PIRSF" id="PIRSF005624">
    <property type="entry name" value="Ni-bind_GTPase"/>
    <property type="match status" value="1"/>
</dbReference>
<dbReference type="SUPFAM" id="SSF52540">
    <property type="entry name" value="P-loop containing nucleoside triphosphate hydrolases"/>
    <property type="match status" value="1"/>
</dbReference>
<protein>
    <recommendedName>
        <fullName evidence="1">Urease accessory protein UreG</fullName>
    </recommendedName>
</protein>
<gene>
    <name evidence="1" type="primary">ureG</name>
    <name type="ordered locus">Daro_1424</name>
</gene>
<evidence type="ECO:0000255" key="1">
    <source>
        <dbReference type="HAMAP-Rule" id="MF_01389"/>
    </source>
</evidence>